<proteinExistence type="inferred from homology"/>
<reference key="1">
    <citation type="submission" date="2007-02" db="EMBL/GenBank/DDBJ databases">
        <title>Complete sequence of Mycobacterium sp. JLS.</title>
        <authorList>
            <consortium name="US DOE Joint Genome Institute"/>
            <person name="Copeland A."/>
            <person name="Lucas S."/>
            <person name="Lapidus A."/>
            <person name="Barry K."/>
            <person name="Detter J.C."/>
            <person name="Glavina del Rio T."/>
            <person name="Hammon N."/>
            <person name="Israni S."/>
            <person name="Dalin E."/>
            <person name="Tice H."/>
            <person name="Pitluck S."/>
            <person name="Chain P."/>
            <person name="Malfatti S."/>
            <person name="Shin M."/>
            <person name="Vergez L."/>
            <person name="Schmutz J."/>
            <person name="Larimer F."/>
            <person name="Land M."/>
            <person name="Hauser L."/>
            <person name="Kyrpides N."/>
            <person name="Mikhailova N."/>
            <person name="Miller C.D."/>
            <person name="Anderson A.J."/>
            <person name="Sims R.C."/>
            <person name="Richardson P."/>
        </authorList>
    </citation>
    <scope>NUCLEOTIDE SEQUENCE [LARGE SCALE GENOMIC DNA]</scope>
    <source>
        <strain>JLS</strain>
    </source>
</reference>
<keyword id="KW-0963">Cytoplasm</keyword>
<keyword id="KW-0690">Ribosome biogenesis</keyword>
<name>RIMP_MYCSJ</name>
<gene>
    <name evidence="1" type="primary">rimP</name>
    <name type="ordered locus">Mjls_2062</name>
</gene>
<comment type="function">
    <text evidence="1">Required for maturation of 30S ribosomal subunits.</text>
</comment>
<comment type="subcellular location">
    <subcellularLocation>
        <location evidence="1">Cytoplasm</location>
    </subcellularLocation>
</comment>
<comment type="similarity">
    <text evidence="1">Belongs to the RimP family.</text>
</comment>
<evidence type="ECO:0000255" key="1">
    <source>
        <dbReference type="HAMAP-Rule" id="MF_01077"/>
    </source>
</evidence>
<accession>A3PY72</accession>
<dbReference type="EMBL" id="CP000580">
    <property type="protein sequence ID" value="ABN97849.1"/>
    <property type="molecule type" value="Genomic_DNA"/>
</dbReference>
<dbReference type="SMR" id="A3PY72"/>
<dbReference type="KEGG" id="mjl:Mjls_2062"/>
<dbReference type="HOGENOM" id="CLU_070525_3_0_11"/>
<dbReference type="BioCyc" id="MSP164757:G1G8C-2081-MONOMER"/>
<dbReference type="GO" id="GO:0005829">
    <property type="term" value="C:cytosol"/>
    <property type="evidence" value="ECO:0007669"/>
    <property type="project" value="TreeGrafter"/>
</dbReference>
<dbReference type="GO" id="GO:0000028">
    <property type="term" value="P:ribosomal small subunit assembly"/>
    <property type="evidence" value="ECO:0007669"/>
    <property type="project" value="TreeGrafter"/>
</dbReference>
<dbReference type="GO" id="GO:0006412">
    <property type="term" value="P:translation"/>
    <property type="evidence" value="ECO:0007669"/>
    <property type="project" value="TreeGrafter"/>
</dbReference>
<dbReference type="CDD" id="cd01734">
    <property type="entry name" value="YlxS_C"/>
    <property type="match status" value="1"/>
</dbReference>
<dbReference type="Gene3D" id="3.30.300.70">
    <property type="entry name" value="RimP-like superfamily, N-terminal"/>
    <property type="match status" value="1"/>
</dbReference>
<dbReference type="HAMAP" id="MF_01077">
    <property type="entry name" value="RimP"/>
    <property type="match status" value="1"/>
</dbReference>
<dbReference type="InterPro" id="IPR003728">
    <property type="entry name" value="Ribosome_maturation_RimP"/>
</dbReference>
<dbReference type="InterPro" id="IPR028998">
    <property type="entry name" value="RimP_C"/>
</dbReference>
<dbReference type="InterPro" id="IPR028989">
    <property type="entry name" value="RimP_N"/>
</dbReference>
<dbReference type="InterPro" id="IPR035956">
    <property type="entry name" value="RimP_N_sf"/>
</dbReference>
<dbReference type="NCBIfam" id="NF000930">
    <property type="entry name" value="PRK00092.2-2"/>
    <property type="match status" value="1"/>
</dbReference>
<dbReference type="PANTHER" id="PTHR33867">
    <property type="entry name" value="RIBOSOME MATURATION FACTOR RIMP"/>
    <property type="match status" value="1"/>
</dbReference>
<dbReference type="PANTHER" id="PTHR33867:SF1">
    <property type="entry name" value="RIBOSOME MATURATION FACTOR RIMP"/>
    <property type="match status" value="1"/>
</dbReference>
<dbReference type="Pfam" id="PF17384">
    <property type="entry name" value="DUF150_C"/>
    <property type="match status" value="1"/>
</dbReference>
<dbReference type="Pfam" id="PF02576">
    <property type="entry name" value="RimP_N"/>
    <property type="match status" value="1"/>
</dbReference>
<dbReference type="SUPFAM" id="SSF75420">
    <property type="entry name" value="YhbC-like, N-terminal domain"/>
    <property type="match status" value="1"/>
</dbReference>
<sequence>MAPEPKLRPTGLPSQEQVKELLDGEFARAGYEIENVVIDGGARPPRITVVVDGDRPLDLDTVASLSRSASEQLDRVDESGPGVTADAATYVLEVTSPGVDRPLTTEKHYRRARGRKVELTLSDGSQLTGRIGALTADGESVSLVVREGARANFSVRELPLEGIVKAVVQVEFSPPSQRELELTGQPREEAGA</sequence>
<organism>
    <name type="scientific">Mycobacterium sp. (strain JLS)</name>
    <dbReference type="NCBI Taxonomy" id="164757"/>
    <lineage>
        <taxon>Bacteria</taxon>
        <taxon>Bacillati</taxon>
        <taxon>Actinomycetota</taxon>
        <taxon>Actinomycetes</taxon>
        <taxon>Mycobacteriales</taxon>
        <taxon>Mycobacteriaceae</taxon>
        <taxon>Mycobacterium</taxon>
    </lineage>
</organism>
<feature type="chain" id="PRO_0000384711" description="Ribosome maturation factor RimP">
    <location>
        <begin position="1"/>
        <end position="192"/>
    </location>
</feature>
<protein>
    <recommendedName>
        <fullName evidence="1">Ribosome maturation factor RimP</fullName>
    </recommendedName>
</protein>